<reference key="1">
    <citation type="journal article" date="2004" name="Proc. Natl. Acad. Sci. U.S.A.">
        <title>The genome sequence of the probiotic intestinal bacterium Lactobacillus johnsonii NCC 533.</title>
        <authorList>
            <person name="Pridmore R.D."/>
            <person name="Berger B."/>
            <person name="Desiere F."/>
            <person name="Vilanova D."/>
            <person name="Barretto C."/>
            <person name="Pittet A.-C."/>
            <person name="Zwahlen M.-C."/>
            <person name="Rouvet M."/>
            <person name="Altermann E."/>
            <person name="Barrangou R."/>
            <person name="Mollet B."/>
            <person name="Mercenier A."/>
            <person name="Klaenhammer T."/>
            <person name="Arigoni F."/>
            <person name="Schell M.A."/>
        </authorList>
    </citation>
    <scope>NUCLEOTIDE SEQUENCE [LARGE SCALE GENOMIC DNA]</scope>
    <source>
        <strain>CNCM I-1225 / La1 / NCC 533</strain>
    </source>
</reference>
<protein>
    <recommendedName>
        <fullName evidence="1">Holliday junction branch migration complex subunit RuvA</fullName>
    </recommendedName>
</protein>
<feature type="chain" id="PRO_0000224875" description="Holliday junction branch migration complex subunit RuvA">
    <location>
        <begin position="1"/>
        <end position="192"/>
    </location>
</feature>
<feature type="region of interest" description="Domain I" evidence="1">
    <location>
        <begin position="1"/>
        <end position="61"/>
    </location>
</feature>
<feature type="region of interest" description="Domain II" evidence="1">
    <location>
        <begin position="62"/>
        <end position="137"/>
    </location>
</feature>
<feature type="region of interest" description="Flexible linker" evidence="1">
    <location>
        <begin position="137"/>
        <end position="140"/>
    </location>
</feature>
<feature type="region of interest" description="Domain III" evidence="1">
    <location>
        <begin position="141"/>
        <end position="192"/>
    </location>
</feature>
<dbReference type="EMBL" id="AE017198">
    <property type="protein sequence ID" value="AAS08459.1"/>
    <property type="molecule type" value="Genomic_DNA"/>
</dbReference>
<dbReference type="RefSeq" id="WP_011161604.1">
    <property type="nucleotide sequence ID" value="NC_005362.1"/>
</dbReference>
<dbReference type="SMR" id="Q74KV9"/>
<dbReference type="GeneID" id="83569895"/>
<dbReference type="KEGG" id="ljo:LJ_0467"/>
<dbReference type="eggNOG" id="COG0632">
    <property type="taxonomic scope" value="Bacteria"/>
</dbReference>
<dbReference type="HOGENOM" id="CLU_087936_1_0_9"/>
<dbReference type="Proteomes" id="UP000000581">
    <property type="component" value="Chromosome"/>
</dbReference>
<dbReference type="GO" id="GO:0005737">
    <property type="term" value="C:cytoplasm"/>
    <property type="evidence" value="ECO:0007669"/>
    <property type="project" value="UniProtKB-SubCell"/>
</dbReference>
<dbReference type="GO" id="GO:0009379">
    <property type="term" value="C:Holliday junction helicase complex"/>
    <property type="evidence" value="ECO:0007669"/>
    <property type="project" value="InterPro"/>
</dbReference>
<dbReference type="GO" id="GO:0048476">
    <property type="term" value="C:Holliday junction resolvase complex"/>
    <property type="evidence" value="ECO:0007669"/>
    <property type="project" value="UniProtKB-UniRule"/>
</dbReference>
<dbReference type="GO" id="GO:0005524">
    <property type="term" value="F:ATP binding"/>
    <property type="evidence" value="ECO:0007669"/>
    <property type="project" value="InterPro"/>
</dbReference>
<dbReference type="GO" id="GO:0000400">
    <property type="term" value="F:four-way junction DNA binding"/>
    <property type="evidence" value="ECO:0007669"/>
    <property type="project" value="UniProtKB-UniRule"/>
</dbReference>
<dbReference type="GO" id="GO:0009378">
    <property type="term" value="F:four-way junction helicase activity"/>
    <property type="evidence" value="ECO:0007669"/>
    <property type="project" value="InterPro"/>
</dbReference>
<dbReference type="GO" id="GO:0006310">
    <property type="term" value="P:DNA recombination"/>
    <property type="evidence" value="ECO:0007669"/>
    <property type="project" value="UniProtKB-UniRule"/>
</dbReference>
<dbReference type="GO" id="GO:0006281">
    <property type="term" value="P:DNA repair"/>
    <property type="evidence" value="ECO:0007669"/>
    <property type="project" value="UniProtKB-UniRule"/>
</dbReference>
<dbReference type="CDD" id="cd14332">
    <property type="entry name" value="UBA_RuvA_C"/>
    <property type="match status" value="1"/>
</dbReference>
<dbReference type="Gene3D" id="1.10.150.20">
    <property type="entry name" value="5' to 3' exonuclease, C-terminal subdomain"/>
    <property type="match status" value="1"/>
</dbReference>
<dbReference type="Gene3D" id="1.10.8.10">
    <property type="entry name" value="DNA helicase RuvA subunit, C-terminal domain"/>
    <property type="match status" value="1"/>
</dbReference>
<dbReference type="Gene3D" id="2.40.50.140">
    <property type="entry name" value="Nucleic acid-binding proteins"/>
    <property type="match status" value="1"/>
</dbReference>
<dbReference type="HAMAP" id="MF_00031">
    <property type="entry name" value="DNA_HJ_migration_RuvA"/>
    <property type="match status" value="1"/>
</dbReference>
<dbReference type="InterPro" id="IPR013849">
    <property type="entry name" value="DNA_helicase_Holl-junc_RuvA_I"/>
</dbReference>
<dbReference type="InterPro" id="IPR003583">
    <property type="entry name" value="Hlx-hairpin-Hlx_DNA-bd_motif"/>
</dbReference>
<dbReference type="InterPro" id="IPR012340">
    <property type="entry name" value="NA-bd_OB-fold"/>
</dbReference>
<dbReference type="InterPro" id="IPR000085">
    <property type="entry name" value="RuvA"/>
</dbReference>
<dbReference type="InterPro" id="IPR010994">
    <property type="entry name" value="RuvA_2-like"/>
</dbReference>
<dbReference type="InterPro" id="IPR011114">
    <property type="entry name" value="RuvA_C"/>
</dbReference>
<dbReference type="InterPro" id="IPR036267">
    <property type="entry name" value="RuvA_C_sf"/>
</dbReference>
<dbReference type="NCBIfam" id="TIGR00084">
    <property type="entry name" value="ruvA"/>
    <property type="match status" value="1"/>
</dbReference>
<dbReference type="Pfam" id="PF14520">
    <property type="entry name" value="HHH_5"/>
    <property type="match status" value="1"/>
</dbReference>
<dbReference type="Pfam" id="PF07499">
    <property type="entry name" value="RuvA_C"/>
    <property type="match status" value="1"/>
</dbReference>
<dbReference type="Pfam" id="PF01330">
    <property type="entry name" value="RuvA_N"/>
    <property type="match status" value="1"/>
</dbReference>
<dbReference type="SMART" id="SM00278">
    <property type="entry name" value="HhH1"/>
    <property type="match status" value="2"/>
</dbReference>
<dbReference type="SUPFAM" id="SSF46929">
    <property type="entry name" value="DNA helicase RuvA subunit, C-terminal domain"/>
    <property type="match status" value="1"/>
</dbReference>
<dbReference type="SUPFAM" id="SSF50249">
    <property type="entry name" value="Nucleic acid-binding proteins"/>
    <property type="match status" value="1"/>
</dbReference>
<dbReference type="SUPFAM" id="SSF47781">
    <property type="entry name" value="RuvA domain 2-like"/>
    <property type="match status" value="1"/>
</dbReference>
<proteinExistence type="inferred from homology"/>
<evidence type="ECO:0000255" key="1">
    <source>
        <dbReference type="HAMAP-Rule" id="MF_00031"/>
    </source>
</evidence>
<sequence length="192" mass="20778">MFEYLKGIVTKIDPAYIVLDVNGVGYKILCPTPYSYDENQPATIYVEQVVRDTGITLYGFLSLEDKELFLKLLSVSGIGPKSAVAIMAAEDTDSLASAIQNGEVKYLTRFPGVGKKTASQIVLDLKGKLGDYVKKSTAAADLTPSLQDALLALVALGYTQKEVDRITPKLAKLPENTADGYVKEALALLLKK</sequence>
<organism>
    <name type="scientific">Lactobacillus johnsonii (strain CNCM I-12250 / La1 / NCC 533)</name>
    <dbReference type="NCBI Taxonomy" id="257314"/>
    <lineage>
        <taxon>Bacteria</taxon>
        <taxon>Bacillati</taxon>
        <taxon>Bacillota</taxon>
        <taxon>Bacilli</taxon>
        <taxon>Lactobacillales</taxon>
        <taxon>Lactobacillaceae</taxon>
        <taxon>Lactobacillus</taxon>
    </lineage>
</organism>
<name>RUVA_LACJO</name>
<keyword id="KW-0963">Cytoplasm</keyword>
<keyword id="KW-0227">DNA damage</keyword>
<keyword id="KW-0233">DNA recombination</keyword>
<keyword id="KW-0234">DNA repair</keyword>
<keyword id="KW-0238">DNA-binding</keyword>
<accession>Q74KV9</accession>
<comment type="function">
    <text evidence="1">The RuvA-RuvB-RuvC complex processes Holliday junction (HJ) DNA during genetic recombination and DNA repair, while the RuvA-RuvB complex plays an important role in the rescue of blocked DNA replication forks via replication fork reversal (RFR). RuvA specifically binds to HJ cruciform DNA, conferring on it an open structure. The RuvB hexamer acts as an ATP-dependent pump, pulling dsDNA into and through the RuvAB complex. HJ branch migration allows RuvC to scan DNA until it finds its consensus sequence, where it cleaves and resolves the cruciform DNA.</text>
</comment>
<comment type="subunit">
    <text evidence="1">Homotetramer. Forms an RuvA(8)-RuvB(12)-Holliday junction (HJ) complex. HJ DNA is sandwiched between 2 RuvA tetramers; dsDNA enters through RuvA and exits via RuvB. An RuvB hexamer assembles on each DNA strand where it exits the tetramer. Each RuvB hexamer is contacted by two RuvA subunits (via domain III) on 2 adjacent RuvB subunits; this complex drives branch migration. In the full resolvosome a probable DNA-RuvA(4)-RuvB(12)-RuvC(2) complex forms which resolves the HJ.</text>
</comment>
<comment type="subcellular location">
    <subcellularLocation>
        <location evidence="1">Cytoplasm</location>
    </subcellularLocation>
</comment>
<comment type="domain">
    <text evidence="1">Has three domains with a flexible linker between the domains II and III and assumes an 'L' shape. Domain III is highly mobile and contacts RuvB.</text>
</comment>
<comment type="similarity">
    <text evidence="1">Belongs to the RuvA family.</text>
</comment>
<gene>
    <name evidence="1" type="primary">ruvA</name>
    <name type="ordered locus">LJ_0467</name>
</gene>